<sequence length="437" mass="45764">MIGLLTLAVFVATFAVIYRWAEGSHLAVLAGAAALVVIGTISGSYTPVMALRSVYFETLALIFGMAAISALLARSGVYAYLAAGTAELSQGQGRWILVMMALVTYGISLASNSLVTVAVVVPVTLTVCFRTGIDPVPVIIAEIIAANLGGASTMIGDFPNMILASAGKLHFNDFIAGMMPVCLILLAVMLVFFERRLGDWKGSEIPVDPVWARGEALRHSAIDRRLLSYGLIIFGVTVAGLILAGPLKVRPGWIAFVAGVTALGLGRFKDDEFFSACGGTDILFYGGLFVMVGALTSVGILDWAVNWLEGITAAHDRVRAILLMWMAAAVTIFVGGGTSAAVFAPVAATLRLDGDGQAAWWALALGIMAGSVAALPGATAGSLAMTQYSGFVKRHPELASAAAAGLQFTHREYVRWGMPLMGIFLVLGTVYIAVLVG</sequence>
<gene>
    <name type="primary">mamN</name>
    <name type="ordered locus">amb0968</name>
</gene>
<dbReference type="EMBL" id="AP007255">
    <property type="protein sequence ID" value="BAE49772.1"/>
    <property type="molecule type" value="Genomic_DNA"/>
</dbReference>
<dbReference type="RefSeq" id="WP_008620782.1">
    <property type="nucleotide sequence ID" value="NC_007626.1"/>
</dbReference>
<dbReference type="SMR" id="Q2W8Q3"/>
<dbReference type="STRING" id="342108.amb0968"/>
<dbReference type="KEGG" id="mag:amb0968"/>
<dbReference type="HOGENOM" id="CLU_011920_4_0_5"/>
<dbReference type="OrthoDB" id="9809303at2"/>
<dbReference type="Proteomes" id="UP000007058">
    <property type="component" value="Chromosome"/>
</dbReference>
<dbReference type="GO" id="GO:0110146">
    <property type="term" value="C:magnetosome membrane"/>
    <property type="evidence" value="ECO:0000250"/>
    <property type="project" value="UniProtKB"/>
</dbReference>
<dbReference type="GO" id="GO:0006811">
    <property type="term" value="P:monoatomic ion transport"/>
    <property type="evidence" value="ECO:0007669"/>
    <property type="project" value="UniProtKB-KW"/>
</dbReference>
<dbReference type="GO" id="GO:0055085">
    <property type="term" value="P:transmembrane transport"/>
    <property type="evidence" value="ECO:0007669"/>
    <property type="project" value="InterPro"/>
</dbReference>
<dbReference type="CDD" id="cd01116">
    <property type="entry name" value="P_permease"/>
    <property type="match status" value="1"/>
</dbReference>
<dbReference type="InterPro" id="IPR004680">
    <property type="entry name" value="Cit_transptr-like_dom"/>
</dbReference>
<dbReference type="InterPro" id="IPR051475">
    <property type="entry name" value="Diverse_Ion_Transporter"/>
</dbReference>
<dbReference type="NCBIfam" id="NF040989">
    <property type="entry name" value="MamN"/>
    <property type="match status" value="1"/>
</dbReference>
<dbReference type="PANTHER" id="PTHR43568">
    <property type="entry name" value="P PROTEIN"/>
    <property type="match status" value="1"/>
</dbReference>
<dbReference type="PANTHER" id="PTHR43568:SF1">
    <property type="entry name" value="P PROTEIN"/>
    <property type="match status" value="1"/>
</dbReference>
<dbReference type="Pfam" id="PF03600">
    <property type="entry name" value="CitMHS"/>
    <property type="match status" value="1"/>
</dbReference>
<comment type="function">
    <text evidence="6">Plays a role in biomineralization; might regulate pH in the magnetosome.</text>
</comment>
<comment type="subcellular location">
    <subcellularLocation>
        <location evidence="1">Magnetosome membrane</location>
        <topology evidence="2">Multi-pass membrane protein</topology>
    </subcellularLocation>
</comment>
<comment type="induction">
    <text evidence="6">Part of the probable 18 gene mamAB operon.</text>
</comment>
<comment type="disruption phenotype">
    <text evidence="3">Cells have no magnetic response but still make empty magnetosome membranes; magnetosome proteins MamA and MamE localize normally (PubMed:20212111). Deletion of genes mamH to mamV (amb0961 to amb0978) gives cells with no magnetosomes and no magnetic response (PubMed:20212111).</text>
</comment>
<comment type="miscellaneous">
    <text evidence="5">This bacteria makes up to 20 cubo-octahedral magnetosomes of about 45 nm in diameter which contain membrane-bound crystals of magnetite (Fe(3)O(4)).</text>
</comment>
<comment type="miscellaneous">
    <text evidence="4">Expression of just the minimal mamAB gene cluster (amb0961 to amb0978), including this gene, is sufficient to form a minimal magnetosome chain with small magnetite particles.</text>
</comment>
<comment type="similarity">
    <text evidence="5">Belongs to the arsenite-antimonite (ArsB) efflux (TC 2.A.45) family.</text>
</comment>
<feature type="chain" id="PRO_0000447743" description="Magnetosome protein MamN">
    <location>
        <begin position="1"/>
        <end position="437"/>
    </location>
</feature>
<feature type="transmembrane region" description="Helical" evidence="2">
    <location>
        <begin position="26"/>
        <end position="46"/>
    </location>
</feature>
<feature type="transmembrane region" description="Helical" evidence="2">
    <location>
        <begin position="53"/>
        <end position="73"/>
    </location>
</feature>
<feature type="transmembrane region" description="Helical" evidence="2">
    <location>
        <begin position="95"/>
        <end position="115"/>
    </location>
</feature>
<feature type="transmembrane region" description="Helical" evidence="2">
    <location>
        <begin position="136"/>
        <end position="156"/>
    </location>
</feature>
<feature type="transmembrane region" description="Helical" evidence="2">
    <location>
        <begin position="174"/>
        <end position="194"/>
    </location>
</feature>
<feature type="transmembrane region" description="Helical" evidence="2">
    <location>
        <begin position="226"/>
        <end position="246"/>
    </location>
</feature>
<feature type="transmembrane region" description="Helical" evidence="2">
    <location>
        <begin position="252"/>
        <end position="268"/>
    </location>
</feature>
<feature type="transmembrane region" description="Helical" evidence="2">
    <location>
        <begin position="281"/>
        <end position="301"/>
    </location>
</feature>
<feature type="transmembrane region" description="Helical" evidence="2">
    <location>
        <begin position="320"/>
        <end position="340"/>
    </location>
</feature>
<feature type="transmembrane region" description="Helical" evidence="2">
    <location>
        <begin position="358"/>
        <end position="378"/>
    </location>
</feature>
<feature type="transmembrane region" description="Helical" evidence="2">
    <location>
        <begin position="416"/>
        <end position="436"/>
    </location>
</feature>
<proteinExistence type="inferred from homology"/>
<evidence type="ECO:0000250" key="1">
    <source>
        <dbReference type="UniProtKB" id="Q6NE56"/>
    </source>
</evidence>
<evidence type="ECO:0000255" key="2"/>
<evidence type="ECO:0000269" key="3">
    <source>
    </source>
</evidence>
<evidence type="ECO:0000269" key="4">
    <source>
    </source>
</evidence>
<evidence type="ECO:0000305" key="5"/>
<evidence type="ECO:0000305" key="6">
    <source>
    </source>
</evidence>
<keyword id="KW-0091">Biomineralization</keyword>
<keyword id="KW-0406">Ion transport</keyword>
<keyword id="KW-1281">Magnetosome</keyword>
<keyword id="KW-0472">Membrane</keyword>
<keyword id="KW-0812">Transmembrane</keyword>
<keyword id="KW-1133">Transmembrane helix</keyword>
<keyword id="KW-0813">Transport</keyword>
<organism>
    <name type="scientific">Paramagnetospirillum magneticum (strain ATCC 700264 / AMB-1)</name>
    <name type="common">Magnetospirillum magneticum</name>
    <dbReference type="NCBI Taxonomy" id="342108"/>
    <lineage>
        <taxon>Bacteria</taxon>
        <taxon>Pseudomonadati</taxon>
        <taxon>Pseudomonadota</taxon>
        <taxon>Alphaproteobacteria</taxon>
        <taxon>Rhodospirillales</taxon>
        <taxon>Magnetospirillaceae</taxon>
        <taxon>Paramagnetospirillum</taxon>
    </lineage>
</organism>
<name>MAMN_PARM1</name>
<protein>
    <recommendedName>
        <fullName evidence="5">Magnetosome protein MamN</fullName>
    </recommendedName>
    <alternativeName>
        <fullName evidence="5">Putative ion transporter MamN</fullName>
    </alternativeName>
</protein>
<accession>Q2W8Q3</accession>
<reference key="1">
    <citation type="journal article" date="2005" name="DNA Res.">
        <title>Complete genome sequence of the facultative anaerobic magnetotactic bacterium Magnetospirillum sp. strain AMB-1.</title>
        <authorList>
            <person name="Matsunaga T."/>
            <person name="Okamura Y."/>
            <person name="Fukuda Y."/>
            <person name="Wahyudi A.T."/>
            <person name="Murase Y."/>
            <person name="Takeyama H."/>
        </authorList>
    </citation>
    <scope>NUCLEOTIDE SEQUENCE [LARGE SCALE GENOMIC DNA]</scope>
    <source>
        <strain>ATCC 700264 / AMB-1</strain>
    </source>
</reference>
<reference key="2">
    <citation type="journal article" date="2010" name="Proc. Natl. Acad. Sci. U.S.A.">
        <title>Comprehensive genetic dissection of the magnetosome gene island reveals the step-wise assembly of a prokaryotic organelle.</title>
        <authorList>
            <person name="Murat D."/>
            <person name="Quinlan A."/>
            <person name="Vali H."/>
            <person name="Komeili A."/>
        </authorList>
    </citation>
    <scope>FUNCTION</scope>
    <scope>PROBABLE OPERON</scope>
    <scope>DISRUPTION PHENOTYPE</scope>
    <source>
        <strain>ATCC 700264 / AMB-1</strain>
    </source>
</reference>
<reference key="3">
    <citation type="journal article" date="2012" name="Mol. Microbiol.">
        <title>The magnetosome membrane protein, MmsF, is a major regulator of magnetite biomineralization in Magnetospirillum magneticum AMB-1.</title>
        <authorList>
            <person name="Murat D."/>
            <person name="Falahati V."/>
            <person name="Bertinetti L."/>
            <person name="Csencsits R."/>
            <person name="Koernig A."/>
            <person name="Downing K."/>
            <person name="Faivre D."/>
            <person name="Komeili A."/>
        </authorList>
    </citation>
    <scope>MINIMAL MAGNETOSOME ISLAND</scope>
    <source>
        <strain>ATCC 700264 / AMB-1</strain>
    </source>
</reference>